<keyword id="KW-0067">ATP-binding</keyword>
<keyword id="KW-0175">Coiled coil</keyword>
<keyword id="KW-0433">Leucine-rich repeat</keyword>
<keyword id="KW-0547">Nucleotide-binding</keyword>
<keyword id="KW-0611">Plant defense</keyword>
<keyword id="KW-1185">Reference proteome</keyword>
<keyword id="KW-0677">Repeat</keyword>
<dbReference type="EMBL" id="AB010692">
    <property type="protein sequence ID" value="BAB09983.1"/>
    <property type="molecule type" value="Genomic_DNA"/>
</dbReference>
<dbReference type="EMBL" id="CP002688">
    <property type="protein sequence ID" value="AED90869.1"/>
    <property type="molecule type" value="Genomic_DNA"/>
</dbReference>
<dbReference type="RefSeq" id="NP_196159.1">
    <property type="nucleotide sequence ID" value="NM_120622.2"/>
</dbReference>
<dbReference type="SMR" id="Q9FLB4"/>
<dbReference type="STRING" id="3702.Q9FLB4"/>
<dbReference type="PaxDb" id="3702-AT5G05400.1"/>
<dbReference type="ProteomicsDB" id="224329"/>
<dbReference type="EnsemblPlants" id="AT5G05400.1">
    <property type="protein sequence ID" value="AT5G05400.1"/>
    <property type="gene ID" value="AT5G05400"/>
</dbReference>
<dbReference type="GeneID" id="830422"/>
<dbReference type="Gramene" id="AT5G05400.1">
    <property type="protein sequence ID" value="AT5G05400.1"/>
    <property type="gene ID" value="AT5G05400"/>
</dbReference>
<dbReference type="KEGG" id="ath:AT5G05400"/>
<dbReference type="Araport" id="AT5G05400"/>
<dbReference type="TAIR" id="AT5G05400"/>
<dbReference type="eggNOG" id="KOG4658">
    <property type="taxonomic scope" value="Eukaryota"/>
</dbReference>
<dbReference type="HOGENOM" id="CLU_000427_4_0_1"/>
<dbReference type="InParanoid" id="Q9FLB4"/>
<dbReference type="OMA" id="VECKEME"/>
<dbReference type="PhylomeDB" id="Q9FLB4"/>
<dbReference type="PRO" id="PR:Q9FLB4"/>
<dbReference type="Proteomes" id="UP000006548">
    <property type="component" value="Chromosome 5"/>
</dbReference>
<dbReference type="ExpressionAtlas" id="Q9FLB4">
    <property type="expression patterns" value="baseline and differential"/>
</dbReference>
<dbReference type="GO" id="GO:0043531">
    <property type="term" value="F:ADP binding"/>
    <property type="evidence" value="ECO:0007669"/>
    <property type="project" value="InterPro"/>
</dbReference>
<dbReference type="GO" id="GO:0005524">
    <property type="term" value="F:ATP binding"/>
    <property type="evidence" value="ECO:0007669"/>
    <property type="project" value="UniProtKB-KW"/>
</dbReference>
<dbReference type="GO" id="GO:0006952">
    <property type="term" value="P:defense response"/>
    <property type="evidence" value="ECO:0007669"/>
    <property type="project" value="UniProtKB-KW"/>
</dbReference>
<dbReference type="FunFam" id="3.80.10.10:FF:000834">
    <property type="entry name" value="Probable disease resistance protein At1g15890"/>
    <property type="match status" value="1"/>
</dbReference>
<dbReference type="FunFam" id="3.40.50.300:FF:001091">
    <property type="entry name" value="Probable disease resistance protein At1g61300"/>
    <property type="match status" value="1"/>
</dbReference>
<dbReference type="FunFam" id="1.10.10.10:FF:000322">
    <property type="entry name" value="Probable disease resistance protein At1g63360"/>
    <property type="match status" value="1"/>
</dbReference>
<dbReference type="FunFam" id="1.10.8.430:FF:000003">
    <property type="entry name" value="Probable disease resistance protein At5g66910"/>
    <property type="match status" value="1"/>
</dbReference>
<dbReference type="Gene3D" id="1.10.8.430">
    <property type="entry name" value="Helical domain of apoptotic protease-activating factors"/>
    <property type="match status" value="1"/>
</dbReference>
<dbReference type="Gene3D" id="3.40.50.300">
    <property type="entry name" value="P-loop containing nucleotide triphosphate hydrolases"/>
    <property type="match status" value="1"/>
</dbReference>
<dbReference type="Gene3D" id="3.80.10.10">
    <property type="entry name" value="Ribonuclease Inhibitor"/>
    <property type="match status" value="1"/>
</dbReference>
<dbReference type="Gene3D" id="1.10.10.10">
    <property type="entry name" value="Winged helix-like DNA-binding domain superfamily/Winged helix DNA-binding domain"/>
    <property type="match status" value="1"/>
</dbReference>
<dbReference type="InterPro" id="IPR042197">
    <property type="entry name" value="Apaf_helical"/>
</dbReference>
<dbReference type="InterPro" id="IPR001611">
    <property type="entry name" value="Leu-rich_rpt"/>
</dbReference>
<dbReference type="InterPro" id="IPR003591">
    <property type="entry name" value="Leu-rich_rpt_typical-subtyp"/>
</dbReference>
<dbReference type="InterPro" id="IPR032675">
    <property type="entry name" value="LRR_dom_sf"/>
</dbReference>
<dbReference type="InterPro" id="IPR002182">
    <property type="entry name" value="NB-ARC"/>
</dbReference>
<dbReference type="InterPro" id="IPR027417">
    <property type="entry name" value="P-loop_NTPase"/>
</dbReference>
<dbReference type="InterPro" id="IPR050905">
    <property type="entry name" value="Plant_NBS-LRR"/>
</dbReference>
<dbReference type="InterPro" id="IPR036388">
    <property type="entry name" value="WH-like_DNA-bd_sf"/>
</dbReference>
<dbReference type="PANTHER" id="PTHR33463:SF220">
    <property type="entry name" value="NB-ARC DOMAIN-CONTAINING PROTEIN"/>
    <property type="match status" value="1"/>
</dbReference>
<dbReference type="PANTHER" id="PTHR33463">
    <property type="entry name" value="NB-ARC DOMAIN-CONTAINING PROTEIN-RELATED"/>
    <property type="match status" value="1"/>
</dbReference>
<dbReference type="Pfam" id="PF13855">
    <property type="entry name" value="LRR_8"/>
    <property type="match status" value="1"/>
</dbReference>
<dbReference type="Pfam" id="PF00931">
    <property type="entry name" value="NB-ARC"/>
    <property type="match status" value="1"/>
</dbReference>
<dbReference type="Pfam" id="PF23559">
    <property type="entry name" value="WH_DRP"/>
    <property type="match status" value="1"/>
</dbReference>
<dbReference type="PRINTS" id="PR00364">
    <property type="entry name" value="DISEASERSIST"/>
</dbReference>
<dbReference type="SMART" id="SM00369">
    <property type="entry name" value="LRR_TYP"/>
    <property type="match status" value="2"/>
</dbReference>
<dbReference type="SUPFAM" id="SSF52058">
    <property type="entry name" value="L domain-like"/>
    <property type="match status" value="1"/>
</dbReference>
<dbReference type="SUPFAM" id="SSF52540">
    <property type="entry name" value="P-loop containing nucleoside triphosphate hydrolases"/>
    <property type="match status" value="1"/>
</dbReference>
<reference key="1">
    <citation type="journal article" date="1998" name="DNA Res.">
        <title>Structural analysis of Arabidopsis thaliana chromosome 5. V. Sequence features of the regions of 1,381,565 bp covered by twenty one physically assigned P1 and TAC clones.</title>
        <authorList>
            <person name="Kaneko T."/>
            <person name="Kotani H."/>
            <person name="Nakamura Y."/>
            <person name="Sato S."/>
            <person name="Asamizu E."/>
            <person name="Miyajima N."/>
            <person name="Tabata S."/>
        </authorList>
    </citation>
    <scope>NUCLEOTIDE SEQUENCE [LARGE SCALE GENOMIC DNA]</scope>
    <source>
        <strain>cv. Columbia</strain>
    </source>
</reference>
<reference key="2">
    <citation type="journal article" date="2017" name="Plant J.">
        <title>Araport11: a complete reannotation of the Arabidopsis thaliana reference genome.</title>
        <authorList>
            <person name="Cheng C.Y."/>
            <person name="Krishnakumar V."/>
            <person name="Chan A.P."/>
            <person name="Thibaud-Nissen F."/>
            <person name="Schobel S."/>
            <person name="Town C.D."/>
        </authorList>
    </citation>
    <scope>GENOME REANNOTATION</scope>
    <source>
        <strain>cv. Columbia</strain>
    </source>
</reference>
<organism>
    <name type="scientific">Arabidopsis thaliana</name>
    <name type="common">Mouse-ear cress</name>
    <dbReference type="NCBI Taxonomy" id="3702"/>
    <lineage>
        <taxon>Eukaryota</taxon>
        <taxon>Viridiplantae</taxon>
        <taxon>Streptophyta</taxon>
        <taxon>Embryophyta</taxon>
        <taxon>Tracheophyta</taxon>
        <taxon>Spermatophyta</taxon>
        <taxon>Magnoliopsida</taxon>
        <taxon>eudicotyledons</taxon>
        <taxon>Gunneridae</taxon>
        <taxon>Pentapetalae</taxon>
        <taxon>rosids</taxon>
        <taxon>malvids</taxon>
        <taxon>Brassicales</taxon>
        <taxon>Brassicaceae</taxon>
        <taxon>Camelineae</taxon>
        <taxon>Arabidopsis</taxon>
    </lineage>
</organism>
<evidence type="ECO:0000250" key="1"/>
<evidence type="ECO:0000255" key="2"/>
<evidence type="ECO:0000305" key="3"/>
<name>DRL31_ARATH</name>
<comment type="function">
    <text evidence="1">Potential disease resistance protein.</text>
</comment>
<comment type="domain">
    <text evidence="1">The LRR repeats probably act as specificity determinant of pathogen recognition.</text>
</comment>
<comment type="similarity">
    <text evidence="3">Belongs to the disease resistance NB-LRR family.</text>
</comment>
<comment type="online information" name="NIB-LRRS">
    <link uri="http://niblrrs.ucdavis.edu"/>
    <text>Functional and comparative genomics of disease resistance gene homologs</text>
</comment>
<feature type="chain" id="PRO_0000212763" description="Putative disease resistance protein At5g05400">
    <location>
        <begin position="1"/>
        <end position="874"/>
    </location>
</feature>
<feature type="domain" description="NB-ARC">
    <location>
        <begin position="139"/>
        <end position="434"/>
    </location>
</feature>
<feature type="repeat" description="LRR 1">
    <location>
        <begin position="483"/>
        <end position="505"/>
    </location>
</feature>
<feature type="repeat" description="LRR 2">
    <location>
        <begin position="506"/>
        <end position="527"/>
    </location>
</feature>
<feature type="repeat" description="LRR 3">
    <location>
        <begin position="528"/>
        <end position="548"/>
    </location>
</feature>
<feature type="repeat" description="LRR 4">
    <location>
        <begin position="552"/>
        <end position="574"/>
    </location>
</feature>
<feature type="repeat" description="LRR 5">
    <location>
        <begin position="575"/>
        <end position="597"/>
    </location>
</feature>
<feature type="repeat" description="LRR 6">
    <location>
        <begin position="598"/>
        <end position="620"/>
    </location>
</feature>
<feature type="repeat" description="LRR 7">
    <location>
        <begin position="621"/>
        <end position="642"/>
    </location>
</feature>
<feature type="coiled-coil region" evidence="2">
    <location>
        <begin position="22"/>
        <end position="74"/>
    </location>
</feature>
<feature type="binding site" evidence="2">
    <location>
        <begin position="182"/>
        <end position="189"/>
    </location>
    <ligand>
        <name>ATP</name>
        <dbReference type="ChEBI" id="CHEBI:30616"/>
    </ligand>
</feature>
<accession>Q9FLB4</accession>
<proteinExistence type="inferred from homology"/>
<sequence>MGACFSVAISCDQAVNNLTSCLSRNQNRFRNLVDHVAALKKTVRQLEARRDDLLKRIKVQEDRGLNLLDEVQQWLSEVESRVCEAHDILSQSDEEIDNLCCGQYCSKRCKYSYDYSKSVINKLQDVENLLSKGVFDEVAQKGPIPKVEERLFHQEIVGQEAIVESTWNSMMEVGVGLLGIYGMGGVGKTTLLSQINNKFRTVSNDFDIAIWVVVSKNPTVKRIQEDIGKRLDLYNEGWEQKTENEIASTIKRSLENKKYMLLLDDMWTKVDLANIGIPVPKRNGSKIAFTSRSNEVCGKMGVDKEIEVTCLMWDDAWDLFTRNMKETLESHPKIPEVAKSIARKCNGLPLALNVIGETMARKKSIEEWHDAVGVFSGIEADILSILKFSYDDLKCEKTKSCFLFSALFPEDYEIGKDDLIEYWVGQGIILGSKGINYKGYTIIGTLTRAYLLKESETKEKVKMHDVVREMALWISSGCGDQKQKNVLVVEANAQLRDIPKIEDQKAVRRMSLIYNQIEEACESLHCPKLETLLLRDNRLRKISREFLSHVPILMVLDLSLNPNLIELPSFSPLYSLRFLNLSCTGITSLPDGLYALRNLLYLNLEHTYMLKRIYEIHDLPNLEVLKLYASGIDITDKLVRQIQAMKHLYLLTITLRNSSGLEIFLGDTRFSSYTEGLTLDEQSYYQSLKVPLATISSSRFLEIQDSHIPKIEIEGSSSNESEIVGPRVRRDISFINLRKVRLDNCTGLKDLTWLVFAPHLATLYVVCLPDIEHIISRSEESRLQKTCELAGVIPFRELEFLTLRNLGQLKSIYRDPLLFGKLKEINIKSCPKLTKLPLDSRSAWKQNVVINAEEEWLQGLQWEDVATKERFFPS</sequence>
<gene>
    <name type="ordered locus">At5g05400</name>
    <name type="ORF">K18I23.21</name>
</gene>
<protein>
    <recommendedName>
        <fullName>Putative disease resistance protein At5g05400</fullName>
    </recommendedName>
</protein>